<feature type="chain" id="PRO_1000080218" description="UDP-3-O-acyl-N-acetylglucosamine deacetylase">
    <location>
        <begin position="1"/>
        <end position="305"/>
    </location>
</feature>
<feature type="active site" description="Proton donor" evidence="1">
    <location>
        <position position="265"/>
    </location>
</feature>
<feature type="binding site" evidence="1">
    <location>
        <position position="79"/>
    </location>
    <ligand>
        <name>Zn(2+)</name>
        <dbReference type="ChEBI" id="CHEBI:29105"/>
    </ligand>
</feature>
<feature type="binding site" evidence="1">
    <location>
        <position position="238"/>
    </location>
    <ligand>
        <name>Zn(2+)</name>
        <dbReference type="ChEBI" id="CHEBI:29105"/>
    </ligand>
</feature>
<feature type="binding site" evidence="1">
    <location>
        <position position="242"/>
    </location>
    <ligand>
        <name>Zn(2+)</name>
        <dbReference type="ChEBI" id="CHEBI:29105"/>
    </ligand>
</feature>
<dbReference type="EC" id="3.5.1.108" evidence="1"/>
<dbReference type="EMBL" id="CP000946">
    <property type="protein sequence ID" value="ACA79175.1"/>
    <property type="molecule type" value="Genomic_DNA"/>
</dbReference>
<dbReference type="RefSeq" id="WP_000595482.1">
    <property type="nucleotide sequence ID" value="NZ_MTFT01000035.1"/>
</dbReference>
<dbReference type="SMR" id="B1IR82"/>
<dbReference type="GeneID" id="93777338"/>
<dbReference type="KEGG" id="ecl:EcolC_3561"/>
<dbReference type="HOGENOM" id="CLU_046528_1_0_6"/>
<dbReference type="UniPathway" id="UPA00359">
    <property type="reaction ID" value="UER00478"/>
</dbReference>
<dbReference type="GO" id="GO:0016020">
    <property type="term" value="C:membrane"/>
    <property type="evidence" value="ECO:0007669"/>
    <property type="project" value="GOC"/>
</dbReference>
<dbReference type="GO" id="GO:0046872">
    <property type="term" value="F:metal ion binding"/>
    <property type="evidence" value="ECO:0007669"/>
    <property type="project" value="UniProtKB-KW"/>
</dbReference>
<dbReference type="GO" id="GO:0103117">
    <property type="term" value="F:UDP-3-O-acyl-N-acetylglucosamine deacetylase activity"/>
    <property type="evidence" value="ECO:0007669"/>
    <property type="project" value="UniProtKB-UniRule"/>
</dbReference>
<dbReference type="GO" id="GO:0009245">
    <property type="term" value="P:lipid A biosynthetic process"/>
    <property type="evidence" value="ECO:0007669"/>
    <property type="project" value="UniProtKB-UniRule"/>
</dbReference>
<dbReference type="FunFam" id="3.30.1700.10:FF:000001">
    <property type="entry name" value="UDP-3-O-acyl-N-acetylglucosamine deacetylase"/>
    <property type="match status" value="1"/>
</dbReference>
<dbReference type="FunFam" id="3.30.230.20:FF:000001">
    <property type="entry name" value="UDP-3-O-acyl-N-acetylglucosamine deacetylase"/>
    <property type="match status" value="1"/>
</dbReference>
<dbReference type="Gene3D" id="3.30.230.20">
    <property type="entry name" value="lpxc deacetylase, domain 1"/>
    <property type="match status" value="1"/>
</dbReference>
<dbReference type="Gene3D" id="3.30.1700.10">
    <property type="entry name" value="lpxc deacetylase, domain 2"/>
    <property type="match status" value="1"/>
</dbReference>
<dbReference type="HAMAP" id="MF_00388">
    <property type="entry name" value="LpxC"/>
    <property type="match status" value="1"/>
</dbReference>
<dbReference type="InterPro" id="IPR020568">
    <property type="entry name" value="Ribosomal_Su5_D2-typ_SF"/>
</dbReference>
<dbReference type="InterPro" id="IPR004463">
    <property type="entry name" value="UDP-acyl_GlcNac_deAcase"/>
</dbReference>
<dbReference type="InterPro" id="IPR011334">
    <property type="entry name" value="UDP-acyl_GlcNac_deAcase_C"/>
</dbReference>
<dbReference type="InterPro" id="IPR015870">
    <property type="entry name" value="UDP-acyl_N-AcGlcN_deAcase_N"/>
</dbReference>
<dbReference type="NCBIfam" id="TIGR00325">
    <property type="entry name" value="lpxC"/>
    <property type="match status" value="1"/>
</dbReference>
<dbReference type="PANTHER" id="PTHR33694">
    <property type="entry name" value="UDP-3-O-ACYL-N-ACETYLGLUCOSAMINE DEACETYLASE 1, MITOCHONDRIAL-RELATED"/>
    <property type="match status" value="1"/>
</dbReference>
<dbReference type="PANTHER" id="PTHR33694:SF1">
    <property type="entry name" value="UDP-3-O-ACYL-N-ACETYLGLUCOSAMINE DEACETYLASE 1, MITOCHONDRIAL-RELATED"/>
    <property type="match status" value="1"/>
</dbReference>
<dbReference type="Pfam" id="PF03331">
    <property type="entry name" value="LpxC"/>
    <property type="match status" value="1"/>
</dbReference>
<dbReference type="SUPFAM" id="SSF54211">
    <property type="entry name" value="Ribosomal protein S5 domain 2-like"/>
    <property type="match status" value="2"/>
</dbReference>
<evidence type="ECO:0000255" key="1">
    <source>
        <dbReference type="HAMAP-Rule" id="MF_00388"/>
    </source>
</evidence>
<accession>B1IR82</accession>
<keyword id="KW-0378">Hydrolase</keyword>
<keyword id="KW-0441">Lipid A biosynthesis</keyword>
<keyword id="KW-0444">Lipid biosynthesis</keyword>
<keyword id="KW-0443">Lipid metabolism</keyword>
<keyword id="KW-0479">Metal-binding</keyword>
<keyword id="KW-0862">Zinc</keyword>
<proteinExistence type="inferred from homology"/>
<gene>
    <name evidence="1" type="primary">lpxC</name>
    <name type="ordered locus">EcolC_3561</name>
</gene>
<reference key="1">
    <citation type="submission" date="2008-02" db="EMBL/GenBank/DDBJ databases">
        <title>Complete sequence of Escherichia coli C str. ATCC 8739.</title>
        <authorList>
            <person name="Copeland A."/>
            <person name="Lucas S."/>
            <person name="Lapidus A."/>
            <person name="Glavina del Rio T."/>
            <person name="Dalin E."/>
            <person name="Tice H."/>
            <person name="Bruce D."/>
            <person name="Goodwin L."/>
            <person name="Pitluck S."/>
            <person name="Kiss H."/>
            <person name="Brettin T."/>
            <person name="Detter J.C."/>
            <person name="Han C."/>
            <person name="Kuske C.R."/>
            <person name="Schmutz J."/>
            <person name="Larimer F."/>
            <person name="Land M."/>
            <person name="Hauser L."/>
            <person name="Kyrpides N."/>
            <person name="Mikhailova N."/>
            <person name="Ingram L."/>
            <person name="Richardson P."/>
        </authorList>
    </citation>
    <scope>NUCLEOTIDE SEQUENCE [LARGE SCALE GENOMIC DNA]</scope>
    <source>
        <strain>ATCC 8739 / DSM 1576 / NBRC 3972 / NCIMB 8545 / WDCM 00012 / Crooks</strain>
    </source>
</reference>
<protein>
    <recommendedName>
        <fullName evidence="1">UDP-3-O-acyl-N-acetylglucosamine deacetylase</fullName>
        <shortName evidence="1">UDP-3-O-acyl-GlcNAc deacetylase</shortName>
        <ecNumber evidence="1">3.5.1.108</ecNumber>
    </recommendedName>
    <alternativeName>
        <fullName evidence="1">UDP-3-O-[R-3-hydroxymyristoyl]-N-acetylglucosamine deacetylase</fullName>
    </alternativeName>
</protein>
<name>LPXC_ECOLC</name>
<organism>
    <name type="scientific">Escherichia coli (strain ATCC 8739 / DSM 1576 / NBRC 3972 / NCIMB 8545 / WDCM 00012 / Crooks)</name>
    <dbReference type="NCBI Taxonomy" id="481805"/>
    <lineage>
        <taxon>Bacteria</taxon>
        <taxon>Pseudomonadati</taxon>
        <taxon>Pseudomonadota</taxon>
        <taxon>Gammaproteobacteria</taxon>
        <taxon>Enterobacterales</taxon>
        <taxon>Enterobacteriaceae</taxon>
        <taxon>Escherichia</taxon>
    </lineage>
</organism>
<comment type="function">
    <text evidence="1">Catalyzes the hydrolysis of UDP-3-O-myristoyl-N-acetylglucosamine to form UDP-3-O-myristoylglucosamine and acetate, the committed step in lipid A biosynthesis.</text>
</comment>
<comment type="catalytic activity">
    <reaction evidence="1">
        <text>a UDP-3-O-[(3R)-3-hydroxyacyl]-N-acetyl-alpha-D-glucosamine + H2O = a UDP-3-O-[(3R)-3-hydroxyacyl]-alpha-D-glucosamine + acetate</text>
        <dbReference type="Rhea" id="RHEA:67816"/>
        <dbReference type="ChEBI" id="CHEBI:15377"/>
        <dbReference type="ChEBI" id="CHEBI:30089"/>
        <dbReference type="ChEBI" id="CHEBI:137740"/>
        <dbReference type="ChEBI" id="CHEBI:173225"/>
        <dbReference type="EC" id="3.5.1.108"/>
    </reaction>
</comment>
<comment type="cofactor">
    <cofactor evidence="1">
        <name>Zn(2+)</name>
        <dbReference type="ChEBI" id="CHEBI:29105"/>
    </cofactor>
</comment>
<comment type="pathway">
    <text evidence="1">Glycolipid biosynthesis; lipid IV(A) biosynthesis; lipid IV(A) from (3R)-3-hydroxytetradecanoyl-[acyl-carrier-protein] and UDP-N-acetyl-alpha-D-glucosamine: step 2/6.</text>
</comment>
<comment type="similarity">
    <text evidence="1">Belongs to the LpxC family.</text>
</comment>
<sequence length="305" mass="33956">MIKQRTLKRIVQATGVGLHTGKKVTLTLRPAPANTGVIYRRTDLNPPVDFPADAKSVRDTMLCTCLVNEHDVRISTVEHLNAALAGLGIDNIVIEVNAPEIPIMDGSAAPFVYLLLDAGIDELNCAKKFVRIKETVRVEDGDKWAEFKPYNGFSLDFTIDFNHPAIDSSNQRYAMNFSADAFMRQISRARTFGFMRDIEYLQSRGLCLGGSFDCAIVVDDYRVLNEDGLRFEDEFVRHKMLDAIGDLFMCGHNIIGAFTAYKSGHALNNKLLQAVLAKQEAWEYVTFQDDAELPLAFKAPSAVLA</sequence>